<evidence type="ECO:0000255" key="1">
    <source>
        <dbReference type="HAMAP-Rule" id="MF_00101"/>
    </source>
</evidence>
<gene>
    <name evidence="1" type="primary">acpS</name>
    <name type="ordered locus">SERP1684</name>
</gene>
<feature type="chain" id="PRO_0000175707" description="Holo-[acyl-carrier-protein] synthase">
    <location>
        <begin position="1"/>
        <end position="117"/>
    </location>
</feature>
<feature type="binding site" evidence="1">
    <location>
        <position position="8"/>
    </location>
    <ligand>
        <name>Mg(2+)</name>
        <dbReference type="ChEBI" id="CHEBI:18420"/>
    </ligand>
</feature>
<feature type="binding site" evidence="1">
    <location>
        <position position="58"/>
    </location>
    <ligand>
        <name>Mg(2+)</name>
        <dbReference type="ChEBI" id="CHEBI:18420"/>
    </ligand>
</feature>
<keyword id="KW-0963">Cytoplasm</keyword>
<keyword id="KW-0275">Fatty acid biosynthesis</keyword>
<keyword id="KW-0276">Fatty acid metabolism</keyword>
<keyword id="KW-0444">Lipid biosynthesis</keyword>
<keyword id="KW-0443">Lipid metabolism</keyword>
<keyword id="KW-0460">Magnesium</keyword>
<keyword id="KW-0479">Metal-binding</keyword>
<keyword id="KW-1185">Reference proteome</keyword>
<keyword id="KW-0808">Transferase</keyword>
<name>ACPS_STAEQ</name>
<sequence length="117" mass="13535">MIYGIGIDLIEIERIKNLQNQTKFIERILTIEERDKLNQYTHEQRRLEFLAGRFTVKEAFSKALGTGLGKSVSFQDINCYNDALGKPCIDYPGFYTHVSITHTENYAMSQVILEKNE</sequence>
<dbReference type="EC" id="2.7.8.7" evidence="1"/>
<dbReference type="EMBL" id="CP000029">
    <property type="protein sequence ID" value="AAW55047.1"/>
    <property type="molecule type" value="Genomic_DNA"/>
</dbReference>
<dbReference type="RefSeq" id="WP_002457108.1">
    <property type="nucleotide sequence ID" value="NC_002976.3"/>
</dbReference>
<dbReference type="SMR" id="Q5HME4"/>
<dbReference type="STRING" id="176279.SERP1684"/>
<dbReference type="GeneID" id="50018224"/>
<dbReference type="KEGG" id="ser:SERP1684"/>
<dbReference type="eggNOG" id="COG0736">
    <property type="taxonomic scope" value="Bacteria"/>
</dbReference>
<dbReference type="HOGENOM" id="CLU_089696_1_2_9"/>
<dbReference type="Proteomes" id="UP000000531">
    <property type="component" value="Chromosome"/>
</dbReference>
<dbReference type="GO" id="GO:0005829">
    <property type="term" value="C:cytosol"/>
    <property type="evidence" value="ECO:0007669"/>
    <property type="project" value="TreeGrafter"/>
</dbReference>
<dbReference type="GO" id="GO:0008897">
    <property type="term" value="F:holo-[acyl-carrier-protein] synthase activity"/>
    <property type="evidence" value="ECO:0007669"/>
    <property type="project" value="UniProtKB-UniRule"/>
</dbReference>
<dbReference type="GO" id="GO:0000287">
    <property type="term" value="F:magnesium ion binding"/>
    <property type="evidence" value="ECO:0007669"/>
    <property type="project" value="UniProtKB-UniRule"/>
</dbReference>
<dbReference type="GO" id="GO:0006633">
    <property type="term" value="P:fatty acid biosynthetic process"/>
    <property type="evidence" value="ECO:0007669"/>
    <property type="project" value="UniProtKB-UniRule"/>
</dbReference>
<dbReference type="GO" id="GO:0019878">
    <property type="term" value="P:lysine biosynthetic process via aminoadipic acid"/>
    <property type="evidence" value="ECO:0007669"/>
    <property type="project" value="TreeGrafter"/>
</dbReference>
<dbReference type="Gene3D" id="3.90.470.20">
    <property type="entry name" value="4'-phosphopantetheinyl transferase domain"/>
    <property type="match status" value="1"/>
</dbReference>
<dbReference type="HAMAP" id="MF_00101">
    <property type="entry name" value="AcpS"/>
    <property type="match status" value="1"/>
</dbReference>
<dbReference type="InterPro" id="IPR008278">
    <property type="entry name" value="4-PPantetheinyl_Trfase_dom"/>
</dbReference>
<dbReference type="InterPro" id="IPR037143">
    <property type="entry name" value="4-PPantetheinyl_Trfase_dom_sf"/>
</dbReference>
<dbReference type="InterPro" id="IPR002582">
    <property type="entry name" value="ACPS"/>
</dbReference>
<dbReference type="InterPro" id="IPR050559">
    <property type="entry name" value="P-Pant_transferase_sf"/>
</dbReference>
<dbReference type="InterPro" id="IPR004568">
    <property type="entry name" value="Ppantetheine-prot_Trfase_dom"/>
</dbReference>
<dbReference type="NCBIfam" id="TIGR00516">
    <property type="entry name" value="acpS"/>
    <property type="match status" value="1"/>
</dbReference>
<dbReference type="NCBIfam" id="TIGR00556">
    <property type="entry name" value="pantethn_trn"/>
    <property type="match status" value="1"/>
</dbReference>
<dbReference type="PANTHER" id="PTHR12215:SF10">
    <property type="entry name" value="L-AMINOADIPATE-SEMIALDEHYDE DEHYDROGENASE-PHOSPHOPANTETHEINYL TRANSFERASE"/>
    <property type="match status" value="1"/>
</dbReference>
<dbReference type="PANTHER" id="PTHR12215">
    <property type="entry name" value="PHOSPHOPANTETHEINE TRANSFERASE"/>
    <property type="match status" value="1"/>
</dbReference>
<dbReference type="Pfam" id="PF01648">
    <property type="entry name" value="ACPS"/>
    <property type="match status" value="1"/>
</dbReference>
<dbReference type="SUPFAM" id="SSF56214">
    <property type="entry name" value="4'-phosphopantetheinyl transferase"/>
    <property type="match status" value="1"/>
</dbReference>
<comment type="function">
    <text evidence="1">Transfers the 4'-phosphopantetheine moiety from coenzyme A to a Ser of acyl-carrier-protein.</text>
</comment>
<comment type="catalytic activity">
    <reaction evidence="1">
        <text>apo-[ACP] + CoA = holo-[ACP] + adenosine 3',5'-bisphosphate + H(+)</text>
        <dbReference type="Rhea" id="RHEA:12068"/>
        <dbReference type="Rhea" id="RHEA-COMP:9685"/>
        <dbReference type="Rhea" id="RHEA-COMP:9690"/>
        <dbReference type="ChEBI" id="CHEBI:15378"/>
        <dbReference type="ChEBI" id="CHEBI:29999"/>
        <dbReference type="ChEBI" id="CHEBI:57287"/>
        <dbReference type="ChEBI" id="CHEBI:58343"/>
        <dbReference type="ChEBI" id="CHEBI:64479"/>
        <dbReference type="EC" id="2.7.8.7"/>
    </reaction>
</comment>
<comment type="cofactor">
    <cofactor evidence="1">
        <name>Mg(2+)</name>
        <dbReference type="ChEBI" id="CHEBI:18420"/>
    </cofactor>
</comment>
<comment type="subcellular location">
    <subcellularLocation>
        <location evidence="1">Cytoplasm</location>
    </subcellularLocation>
</comment>
<comment type="similarity">
    <text evidence="1">Belongs to the P-Pant transferase superfamily. AcpS family.</text>
</comment>
<organism>
    <name type="scientific">Staphylococcus epidermidis (strain ATCC 35984 / DSM 28319 / BCRC 17069 / CCUG 31568 / BM 3577 / RP62A)</name>
    <dbReference type="NCBI Taxonomy" id="176279"/>
    <lineage>
        <taxon>Bacteria</taxon>
        <taxon>Bacillati</taxon>
        <taxon>Bacillota</taxon>
        <taxon>Bacilli</taxon>
        <taxon>Bacillales</taxon>
        <taxon>Staphylococcaceae</taxon>
        <taxon>Staphylococcus</taxon>
    </lineage>
</organism>
<proteinExistence type="inferred from homology"/>
<reference key="1">
    <citation type="journal article" date="2005" name="J. Bacteriol.">
        <title>Insights on evolution of virulence and resistance from the complete genome analysis of an early methicillin-resistant Staphylococcus aureus strain and a biofilm-producing methicillin-resistant Staphylococcus epidermidis strain.</title>
        <authorList>
            <person name="Gill S.R."/>
            <person name="Fouts D.E."/>
            <person name="Archer G.L."/>
            <person name="Mongodin E.F."/>
            <person name="DeBoy R.T."/>
            <person name="Ravel J."/>
            <person name="Paulsen I.T."/>
            <person name="Kolonay J.F."/>
            <person name="Brinkac L.M."/>
            <person name="Beanan M.J."/>
            <person name="Dodson R.J."/>
            <person name="Daugherty S.C."/>
            <person name="Madupu R."/>
            <person name="Angiuoli S.V."/>
            <person name="Durkin A.S."/>
            <person name="Haft D.H."/>
            <person name="Vamathevan J.J."/>
            <person name="Khouri H."/>
            <person name="Utterback T.R."/>
            <person name="Lee C."/>
            <person name="Dimitrov G."/>
            <person name="Jiang L."/>
            <person name="Qin H."/>
            <person name="Weidman J."/>
            <person name="Tran K."/>
            <person name="Kang K.H."/>
            <person name="Hance I.R."/>
            <person name="Nelson K.E."/>
            <person name="Fraser C.M."/>
        </authorList>
    </citation>
    <scope>NUCLEOTIDE SEQUENCE [LARGE SCALE GENOMIC DNA]</scope>
    <source>
        <strain>ATCC 35984 / DSM 28319 / BCRC 17069 / CCUG 31568 / BM 3577 / RP62A</strain>
    </source>
</reference>
<accession>Q5HME4</accession>
<protein>
    <recommendedName>
        <fullName evidence="1">Holo-[acyl-carrier-protein] synthase</fullName>
        <shortName evidence="1">Holo-ACP synthase</shortName>
        <ecNumber evidence="1">2.7.8.7</ecNumber>
    </recommendedName>
    <alternativeName>
        <fullName evidence="1">4'-phosphopantetheinyl transferase AcpS</fullName>
    </alternativeName>
</protein>